<proteinExistence type="evidence at protein level"/>
<name>SET1_KLULA</name>
<comment type="function">
    <text evidence="1">Catalytic component of the COMPASS (Set1C) complex that specifically mono-, di- and trimethylates histone H3 to form H3K4me1/2/3. Binds RNAs which might negatively affect its histone methyltransferase activity. COMPASS recognizes ubiquitinated H2B on one face of the nucleosome which stimulates the methylation of H3 on the opposing face.</text>
</comment>
<comment type="catalytic activity">
    <reaction evidence="1">
        <text>L-lysyl(4)-[histone H3] + 3 S-adenosyl-L-methionine = N(6),N(6),N(6)-trimethyl-L-lysyl(4)-[histone H3] + 3 S-adenosyl-L-homocysteine + 3 H(+)</text>
        <dbReference type="Rhea" id="RHEA:60260"/>
        <dbReference type="Rhea" id="RHEA-COMP:15537"/>
        <dbReference type="Rhea" id="RHEA-COMP:15547"/>
        <dbReference type="ChEBI" id="CHEBI:15378"/>
        <dbReference type="ChEBI" id="CHEBI:29969"/>
        <dbReference type="ChEBI" id="CHEBI:57856"/>
        <dbReference type="ChEBI" id="CHEBI:59789"/>
        <dbReference type="ChEBI" id="CHEBI:61961"/>
        <dbReference type="EC" id="2.1.1.354"/>
    </reaction>
</comment>
<comment type="catalytic activity">
    <reaction evidence="1">
        <text>N(6)-methyl-L-lysyl(4)-[histone H3] + S-adenosyl-L-methionine = N(6),N(6)-dimethyl-L-lysyl(4)-[histone H3] + S-adenosyl-L-homocysteine + H(+)</text>
        <dbReference type="Rhea" id="RHEA:60268"/>
        <dbReference type="Rhea" id="RHEA-COMP:15540"/>
        <dbReference type="Rhea" id="RHEA-COMP:15543"/>
        <dbReference type="ChEBI" id="CHEBI:15378"/>
        <dbReference type="ChEBI" id="CHEBI:57856"/>
        <dbReference type="ChEBI" id="CHEBI:59789"/>
        <dbReference type="ChEBI" id="CHEBI:61929"/>
        <dbReference type="ChEBI" id="CHEBI:61976"/>
    </reaction>
</comment>
<comment type="catalytic activity">
    <reaction evidence="1">
        <text>N(6),N(6)-dimethyl-L-lysyl(4)-[histone H3] + S-adenosyl-L-methionine = N(6),N(6),N(6)-trimethyl-L-lysyl(4)-[histone H3] + S-adenosyl-L-homocysteine + H(+)</text>
        <dbReference type="Rhea" id="RHEA:60272"/>
        <dbReference type="Rhea" id="RHEA-COMP:15537"/>
        <dbReference type="Rhea" id="RHEA-COMP:15540"/>
        <dbReference type="ChEBI" id="CHEBI:15378"/>
        <dbReference type="ChEBI" id="CHEBI:57856"/>
        <dbReference type="ChEBI" id="CHEBI:59789"/>
        <dbReference type="ChEBI" id="CHEBI:61961"/>
        <dbReference type="ChEBI" id="CHEBI:61976"/>
    </reaction>
</comment>
<comment type="subunit">
    <text evidence="1">Component of the Set1C/COMPASS complex.</text>
</comment>
<comment type="subcellular location">
    <subcellularLocation>
        <location evidence="5">Nucleus</location>
    </subcellularLocation>
    <subcellularLocation>
        <location evidence="5">Chromosome</location>
    </subcellularLocation>
</comment>
<comment type="domain">
    <text evidence="1">The RxxxRR motif forms an adapter helix that bridges the nucleosome and ubiquitin.</text>
</comment>
<comment type="similarity">
    <text evidence="3">Belongs to the class V-like SAM-binding methyltransferase superfamily.</text>
</comment>
<organism>
    <name type="scientific">Kluyveromyces lactis (strain ATCC 8585 / CBS 2359 / DSM 70799 / NBRC 1267 / NRRL Y-1140 / WM37)</name>
    <name type="common">Yeast</name>
    <name type="synonym">Candida sphaerica</name>
    <dbReference type="NCBI Taxonomy" id="284590"/>
    <lineage>
        <taxon>Eukaryota</taxon>
        <taxon>Fungi</taxon>
        <taxon>Dikarya</taxon>
        <taxon>Ascomycota</taxon>
        <taxon>Saccharomycotina</taxon>
        <taxon>Saccharomycetes</taxon>
        <taxon>Saccharomycetales</taxon>
        <taxon>Saccharomycetaceae</taxon>
        <taxon>Kluyveromyces</taxon>
    </lineage>
</organism>
<accession>Q6CIT4</accession>
<keyword id="KW-0002">3D-structure</keyword>
<keyword id="KW-0156">Chromatin regulator</keyword>
<keyword id="KW-0158">Chromosome</keyword>
<keyword id="KW-0489">Methyltransferase</keyword>
<keyword id="KW-0539">Nucleus</keyword>
<keyword id="KW-1185">Reference proteome</keyword>
<keyword id="KW-0949">S-adenosyl-L-methionine</keyword>
<keyword id="KW-0808">Transferase</keyword>
<sequence length="1000" mass="115018">MSGYYNRQYSHFHGNNDRYQTGRYAYQENGNRYKGFQRNGSGNRRYSREGFGSQLRNNENESRPIRSQSRGISEIPRNPFATRPVVSAKYDRDEFNTKYHYYDIVSKRLRNESSFKKWKSEKIPEHGYVTTTELIASDKQKPILMARQPEQTSVDPRIRPMNGDAVSGSISAKKRYRKLRSALVRNSRIPYDSFYIGPEPPKEIIVYPSASNQQPIAAALSEAIIKNYFKSFGEIAHFEQFMDPNSALPLYVYLIKFTGPVSQPDAPYKAAYKASEKFKDAPYTVSGIKFNVILNQNTVLNSIKDKLIKQNAARVTEVNKAKRAIAEKSSGQKPQVIRGVPYDLTQVVNNRPVLFVPAKITFYHRFNAADFRYQLRKYNWAKIIDHYTGVYIVFHDLENAKACLEYESGALVINSHRTHSPIQIEFTFIEPKRRLQSNITNQRDINKPRKIEYSSTEELLEASTKQILKDLHNIIKRDILRRLVGPIIFDTLNPANYPEVVERQKKLDDEKKKREESQKKTTIKAKPAEFDIFSLYGPASKTKKLKRDRKADLGKRHLYTEESPDHQRKKKPKVEHMSHLLNDEISTREDTVDSLNVGSNGENSPESSGYESEDIISDESKKQSSVITTPEEDLPESAASLPDERSKELLQYEGKYKPIASEFPTPVYPYDDFDLNKSKQLSLDKFQLALKDEEDFSILKGIVSEKSKDITTDYTPFLPYSMWKLYQQIEQNGIIRDNQIALNEKEFDSTLASTTGSFIADGFKKIPDKLKSSYLLHHRRLAQPLNTVHNHQEQNFMALNGTESTNQEADLEQDNHNASSRLNRVFQRRFQQDIEAQRAAIGFESDLLSLNQLTKRKKPVTFARSAIHNWGLYALEPIAAKEMIIEYVGESIRQPVAEMREKRYIKSGIGSSYLFRIDENTVIDATKRGGIARFINHCCEPSCTAKIIKVDGRKRIVIYALRDIGTNEELTYDYKFERETDEGERLPCLCGAPSCKGFLN</sequence>
<reference key="1">
    <citation type="journal article" date="2004" name="Nature">
        <title>Genome evolution in yeasts.</title>
        <authorList>
            <person name="Dujon B."/>
            <person name="Sherman D."/>
            <person name="Fischer G."/>
            <person name="Durrens P."/>
            <person name="Casaregola S."/>
            <person name="Lafontaine I."/>
            <person name="de Montigny J."/>
            <person name="Marck C."/>
            <person name="Neuveglise C."/>
            <person name="Talla E."/>
            <person name="Goffard N."/>
            <person name="Frangeul L."/>
            <person name="Aigle M."/>
            <person name="Anthouard V."/>
            <person name="Babour A."/>
            <person name="Barbe V."/>
            <person name="Barnay S."/>
            <person name="Blanchin S."/>
            <person name="Beckerich J.-M."/>
            <person name="Beyne E."/>
            <person name="Bleykasten C."/>
            <person name="Boisrame A."/>
            <person name="Boyer J."/>
            <person name="Cattolico L."/>
            <person name="Confanioleri F."/>
            <person name="de Daruvar A."/>
            <person name="Despons L."/>
            <person name="Fabre E."/>
            <person name="Fairhead C."/>
            <person name="Ferry-Dumazet H."/>
            <person name="Groppi A."/>
            <person name="Hantraye F."/>
            <person name="Hennequin C."/>
            <person name="Jauniaux N."/>
            <person name="Joyet P."/>
            <person name="Kachouri R."/>
            <person name="Kerrest A."/>
            <person name="Koszul R."/>
            <person name="Lemaire M."/>
            <person name="Lesur I."/>
            <person name="Ma L."/>
            <person name="Muller H."/>
            <person name="Nicaud J.-M."/>
            <person name="Nikolski M."/>
            <person name="Oztas S."/>
            <person name="Ozier-Kalogeropoulos O."/>
            <person name="Pellenz S."/>
            <person name="Potier S."/>
            <person name="Richard G.-F."/>
            <person name="Straub M.-L."/>
            <person name="Suleau A."/>
            <person name="Swennen D."/>
            <person name="Tekaia F."/>
            <person name="Wesolowski-Louvel M."/>
            <person name="Westhof E."/>
            <person name="Wirth B."/>
            <person name="Zeniou-Meyer M."/>
            <person name="Zivanovic Y."/>
            <person name="Bolotin-Fukuhara M."/>
            <person name="Thierry A."/>
            <person name="Bouchier C."/>
            <person name="Caudron B."/>
            <person name="Scarpelli C."/>
            <person name="Gaillardin C."/>
            <person name="Weissenbach J."/>
            <person name="Wincker P."/>
            <person name="Souciet J.-L."/>
        </authorList>
    </citation>
    <scope>NUCLEOTIDE SEQUENCE [LARGE SCALE GENOMIC DNA]</scope>
    <source>
        <strain>ATCC 8585 / CBS 2359 / DSM 70799 / NBRC 1267 / NRRL Y-1140 / WM37</strain>
    </source>
</reference>
<dbReference type="EC" id="2.1.1.354" evidence="1"/>
<dbReference type="EMBL" id="CR382126">
    <property type="protein sequence ID" value="CAG98863.1"/>
    <property type="molecule type" value="Genomic_DNA"/>
</dbReference>
<dbReference type="RefSeq" id="XP_456155.1">
    <property type="nucleotide sequence ID" value="XM_456155.1"/>
</dbReference>
<dbReference type="PDB" id="6CHG">
    <property type="method" value="X-ray"/>
    <property type="resolution" value="2.98 A"/>
    <property type="chains" value="C=848-1000"/>
</dbReference>
<dbReference type="PDB" id="6UGM">
    <property type="method" value="EM"/>
    <property type="resolution" value="3.70 A"/>
    <property type="chains" value="M=726-1000"/>
</dbReference>
<dbReference type="PDB" id="6UH5">
    <property type="method" value="EM"/>
    <property type="resolution" value="3.50 A"/>
    <property type="chains" value="M=726-1000"/>
</dbReference>
<dbReference type="PDBsum" id="6CHG"/>
<dbReference type="PDBsum" id="6UGM"/>
<dbReference type="PDBsum" id="6UH5"/>
<dbReference type="EMDB" id="EMD-20765"/>
<dbReference type="EMDB" id="EMD-20767"/>
<dbReference type="SMR" id="Q6CIT4"/>
<dbReference type="FunCoup" id="Q6CIT4">
    <property type="interactions" value="170"/>
</dbReference>
<dbReference type="STRING" id="284590.Q6CIT4"/>
<dbReference type="PaxDb" id="284590-Q6CIT4"/>
<dbReference type="KEGG" id="kla:KLLA0_F24134g"/>
<dbReference type="eggNOG" id="KOG1080">
    <property type="taxonomic scope" value="Eukaryota"/>
</dbReference>
<dbReference type="HOGENOM" id="CLU_004391_1_0_1"/>
<dbReference type="InParanoid" id="Q6CIT4"/>
<dbReference type="OMA" id="ERLPCLC"/>
<dbReference type="Proteomes" id="UP000000598">
    <property type="component" value="Chromosome F"/>
</dbReference>
<dbReference type="GO" id="GO:0005694">
    <property type="term" value="C:chromosome"/>
    <property type="evidence" value="ECO:0007669"/>
    <property type="project" value="UniProtKB-SubCell"/>
</dbReference>
<dbReference type="GO" id="GO:0048188">
    <property type="term" value="C:Set1C/COMPASS complex"/>
    <property type="evidence" value="ECO:0000250"/>
    <property type="project" value="UniProtKB"/>
</dbReference>
<dbReference type="GO" id="GO:0140999">
    <property type="term" value="F:histone H3K4 trimethyltransferase activity"/>
    <property type="evidence" value="ECO:0007669"/>
    <property type="project" value="UniProtKB-EC"/>
</dbReference>
<dbReference type="GO" id="GO:0003723">
    <property type="term" value="F:RNA binding"/>
    <property type="evidence" value="ECO:0000250"/>
    <property type="project" value="UniProtKB"/>
</dbReference>
<dbReference type="GO" id="GO:0032259">
    <property type="term" value="P:methylation"/>
    <property type="evidence" value="ECO:0007669"/>
    <property type="project" value="UniProtKB-KW"/>
</dbReference>
<dbReference type="CDD" id="cd12302">
    <property type="entry name" value="RRM_scSet1p_like"/>
    <property type="match status" value="1"/>
</dbReference>
<dbReference type="Gene3D" id="3.30.70.330">
    <property type="match status" value="1"/>
</dbReference>
<dbReference type="Gene3D" id="2.170.270.10">
    <property type="entry name" value="SET domain"/>
    <property type="match status" value="1"/>
</dbReference>
<dbReference type="InterPro" id="IPR024657">
    <property type="entry name" value="COMPASS_Set1_N-SET"/>
</dbReference>
<dbReference type="InterPro" id="IPR012677">
    <property type="entry name" value="Nucleotide-bd_a/b_plait_sf"/>
</dbReference>
<dbReference type="InterPro" id="IPR003616">
    <property type="entry name" value="Post-SET_dom"/>
</dbReference>
<dbReference type="InterPro" id="IPR044570">
    <property type="entry name" value="Set1-like"/>
</dbReference>
<dbReference type="InterPro" id="IPR017111">
    <property type="entry name" value="Set1_fungi"/>
</dbReference>
<dbReference type="InterPro" id="IPR048669">
    <property type="entry name" value="SET1_RBD"/>
</dbReference>
<dbReference type="InterPro" id="IPR024636">
    <property type="entry name" value="SET_assoc"/>
</dbReference>
<dbReference type="InterPro" id="IPR001214">
    <property type="entry name" value="SET_dom"/>
</dbReference>
<dbReference type="InterPro" id="IPR046341">
    <property type="entry name" value="SET_dom_sf"/>
</dbReference>
<dbReference type="PANTHER" id="PTHR45814">
    <property type="entry name" value="HISTONE-LYSINE N-METHYLTRANSFERASE SETD1"/>
    <property type="match status" value="1"/>
</dbReference>
<dbReference type="PANTHER" id="PTHR45814:SF2">
    <property type="entry name" value="HISTONE-LYSINE N-METHYLTRANSFERASE SETD1"/>
    <property type="match status" value="1"/>
</dbReference>
<dbReference type="Pfam" id="PF11764">
    <property type="entry name" value="N-SET"/>
    <property type="match status" value="1"/>
</dbReference>
<dbReference type="Pfam" id="PF00856">
    <property type="entry name" value="SET"/>
    <property type="match status" value="1"/>
</dbReference>
<dbReference type="Pfam" id="PF21569">
    <property type="entry name" value="SET1_RBD"/>
    <property type="match status" value="1"/>
</dbReference>
<dbReference type="Pfam" id="PF11767">
    <property type="entry name" value="SET_assoc"/>
    <property type="match status" value="1"/>
</dbReference>
<dbReference type="PIRSF" id="PIRSF037104">
    <property type="entry name" value="Histone_H3-K4_mtfrase_Set1_fun"/>
    <property type="match status" value="1"/>
</dbReference>
<dbReference type="SMART" id="SM01291">
    <property type="entry name" value="N-SET"/>
    <property type="match status" value="1"/>
</dbReference>
<dbReference type="SMART" id="SM00508">
    <property type="entry name" value="PostSET"/>
    <property type="match status" value="1"/>
</dbReference>
<dbReference type="SMART" id="SM00317">
    <property type="entry name" value="SET"/>
    <property type="match status" value="1"/>
</dbReference>
<dbReference type="SUPFAM" id="SSF82199">
    <property type="entry name" value="SET domain"/>
    <property type="match status" value="1"/>
</dbReference>
<dbReference type="PROSITE" id="PS50868">
    <property type="entry name" value="POST_SET"/>
    <property type="match status" value="1"/>
</dbReference>
<dbReference type="PROSITE" id="PS51572">
    <property type="entry name" value="SAM_MT43_1"/>
    <property type="match status" value="1"/>
</dbReference>
<dbReference type="PROSITE" id="PS50280">
    <property type="entry name" value="SET"/>
    <property type="match status" value="1"/>
</dbReference>
<evidence type="ECO:0000250" key="1">
    <source>
        <dbReference type="UniProtKB" id="P38827"/>
    </source>
</evidence>
<evidence type="ECO:0000255" key="2">
    <source>
        <dbReference type="PROSITE-ProRule" id="PRU00155"/>
    </source>
</evidence>
<evidence type="ECO:0000255" key="3">
    <source>
        <dbReference type="PROSITE-ProRule" id="PRU00190"/>
    </source>
</evidence>
<evidence type="ECO:0000256" key="4">
    <source>
        <dbReference type="SAM" id="MobiDB-lite"/>
    </source>
</evidence>
<evidence type="ECO:0000305" key="5"/>
<evidence type="ECO:0007829" key="6">
    <source>
        <dbReference type="PDB" id="6CHG"/>
    </source>
</evidence>
<evidence type="ECO:0007829" key="7">
    <source>
        <dbReference type="PDB" id="6UH5"/>
    </source>
</evidence>
<gene>
    <name type="primary">SET1</name>
    <name type="ordered locus">KLLA0F24134g</name>
</gene>
<protein>
    <recommendedName>
        <fullName>Histone-lysine N-methyltransferase, H3 lysine-4 specific</fullName>
        <ecNumber evidence="1">2.1.1.354</ecNumber>
    </recommendedName>
    <alternativeName>
        <fullName>COMPASS component SET1</fullName>
    </alternativeName>
    <alternativeName>
        <fullName>SET domain-containing protein 1</fullName>
    </alternativeName>
</protein>
<feature type="chain" id="PRO_0000269775" description="Histone-lysine N-methyltransferase, H3 lysine-4 specific">
    <location>
        <begin position="1"/>
        <end position="1000"/>
    </location>
</feature>
<feature type="domain" description="SET" evidence="3">
    <location>
        <begin position="858"/>
        <end position="975"/>
    </location>
</feature>
<feature type="domain" description="Post-SET" evidence="2">
    <location>
        <begin position="984"/>
        <end position="1000"/>
    </location>
</feature>
<feature type="region of interest" description="Disordered" evidence="4">
    <location>
        <begin position="29"/>
        <end position="78"/>
    </location>
</feature>
<feature type="region of interest" description="Disordered" evidence="4">
    <location>
        <begin position="543"/>
        <end position="644"/>
    </location>
</feature>
<feature type="short sequence motif" description="RxxxRR motif" evidence="1">
    <location>
        <begin position="824"/>
        <end position="829"/>
    </location>
</feature>
<feature type="compositionally biased region" description="Basic and acidic residues" evidence="4">
    <location>
        <begin position="549"/>
        <end position="566"/>
    </location>
</feature>
<feature type="compositionally biased region" description="Basic and acidic residues" evidence="4">
    <location>
        <begin position="574"/>
        <end position="591"/>
    </location>
</feature>
<feature type="compositionally biased region" description="Low complexity" evidence="4">
    <location>
        <begin position="596"/>
        <end position="610"/>
    </location>
</feature>
<feature type="binding site" evidence="3">
    <location>
        <position position="974"/>
    </location>
    <ligand>
        <name>S-adenosyl-L-methionine</name>
        <dbReference type="ChEBI" id="CHEBI:59789"/>
    </ligand>
</feature>
<feature type="helix" evidence="7">
    <location>
        <begin position="727"/>
        <end position="738"/>
    </location>
</feature>
<feature type="turn" evidence="7">
    <location>
        <begin position="739"/>
        <end position="742"/>
    </location>
</feature>
<feature type="strand" evidence="7">
    <location>
        <begin position="758"/>
        <end position="760"/>
    </location>
</feature>
<feature type="helix" evidence="7">
    <location>
        <begin position="821"/>
        <end position="831"/>
    </location>
</feature>
<feature type="turn" evidence="7">
    <location>
        <begin position="832"/>
        <end position="837"/>
    </location>
</feature>
<feature type="helix" evidence="6">
    <location>
        <begin position="851"/>
        <end position="856"/>
    </location>
</feature>
<feature type="strand" evidence="6">
    <location>
        <begin position="860"/>
        <end position="864"/>
    </location>
</feature>
<feature type="strand" evidence="6">
    <location>
        <begin position="866"/>
        <end position="876"/>
    </location>
</feature>
<feature type="strand" evidence="6">
    <location>
        <begin position="883"/>
        <end position="887"/>
    </location>
</feature>
<feature type="strand" evidence="6">
    <location>
        <begin position="889"/>
        <end position="893"/>
    </location>
</feature>
<feature type="helix" evidence="6">
    <location>
        <begin position="894"/>
        <end position="906"/>
    </location>
</feature>
<feature type="strand" evidence="6">
    <location>
        <begin position="914"/>
        <end position="918"/>
    </location>
</feature>
<feature type="strand" evidence="6">
    <location>
        <begin position="921"/>
        <end position="929"/>
    </location>
</feature>
<feature type="helix" evidence="6">
    <location>
        <begin position="931"/>
        <end position="934"/>
    </location>
</feature>
<feature type="strand" evidence="6">
    <location>
        <begin position="942"/>
        <end position="950"/>
    </location>
</feature>
<feature type="strand" evidence="6">
    <location>
        <begin position="953"/>
        <end position="962"/>
    </location>
</feature>
<feature type="strand" evidence="7">
    <location>
        <begin position="993"/>
        <end position="995"/>
    </location>
</feature>